<organism>
    <name type="scientific">Sulfurovum sp. (strain NBC37-1)</name>
    <dbReference type="NCBI Taxonomy" id="387093"/>
    <lineage>
        <taxon>Bacteria</taxon>
        <taxon>Pseudomonadati</taxon>
        <taxon>Campylobacterota</taxon>
        <taxon>Epsilonproteobacteria</taxon>
        <taxon>Campylobacterales</taxon>
        <taxon>Sulfurovaceae</taxon>
        <taxon>Sulfurovum</taxon>
    </lineage>
</organism>
<gene>
    <name evidence="1" type="primary">rpmG</name>
    <name type="ordered locus">SUN_0124</name>
</gene>
<comment type="similarity">
    <text evidence="1">Belongs to the bacterial ribosomal protein bL33 family.</text>
</comment>
<sequence length="50" mass="6094">MRETVHLGCEKCTRRNYHTTKNKKTTTEKLALKKYCKWCKEHTVHKEMKL</sequence>
<evidence type="ECO:0000255" key="1">
    <source>
        <dbReference type="HAMAP-Rule" id="MF_00294"/>
    </source>
</evidence>
<evidence type="ECO:0000305" key="2"/>
<dbReference type="EMBL" id="AP009179">
    <property type="protein sequence ID" value="BAF71084.1"/>
    <property type="molecule type" value="Genomic_DNA"/>
</dbReference>
<dbReference type="RefSeq" id="WP_011979817.1">
    <property type="nucleotide sequence ID" value="NC_009663.1"/>
</dbReference>
<dbReference type="SMR" id="A6Q6H5"/>
<dbReference type="STRING" id="387093.SUN_0124"/>
<dbReference type="KEGG" id="sun:SUN_0124"/>
<dbReference type="eggNOG" id="COG0267">
    <property type="taxonomic scope" value="Bacteria"/>
</dbReference>
<dbReference type="HOGENOM" id="CLU_190949_0_2_7"/>
<dbReference type="Proteomes" id="UP000006378">
    <property type="component" value="Chromosome"/>
</dbReference>
<dbReference type="GO" id="GO:0005737">
    <property type="term" value="C:cytoplasm"/>
    <property type="evidence" value="ECO:0007669"/>
    <property type="project" value="UniProtKB-ARBA"/>
</dbReference>
<dbReference type="GO" id="GO:1990904">
    <property type="term" value="C:ribonucleoprotein complex"/>
    <property type="evidence" value="ECO:0007669"/>
    <property type="project" value="UniProtKB-KW"/>
</dbReference>
<dbReference type="GO" id="GO:0005840">
    <property type="term" value="C:ribosome"/>
    <property type="evidence" value="ECO:0007669"/>
    <property type="project" value="UniProtKB-KW"/>
</dbReference>
<dbReference type="GO" id="GO:0003735">
    <property type="term" value="F:structural constituent of ribosome"/>
    <property type="evidence" value="ECO:0007669"/>
    <property type="project" value="InterPro"/>
</dbReference>
<dbReference type="GO" id="GO:0006412">
    <property type="term" value="P:translation"/>
    <property type="evidence" value="ECO:0007669"/>
    <property type="project" value="UniProtKB-UniRule"/>
</dbReference>
<dbReference type="Gene3D" id="2.20.28.120">
    <property type="entry name" value="Ribosomal protein L33"/>
    <property type="match status" value="1"/>
</dbReference>
<dbReference type="HAMAP" id="MF_00294">
    <property type="entry name" value="Ribosomal_bL33"/>
    <property type="match status" value="1"/>
</dbReference>
<dbReference type="InterPro" id="IPR001705">
    <property type="entry name" value="Ribosomal_bL33"/>
</dbReference>
<dbReference type="InterPro" id="IPR018264">
    <property type="entry name" value="Ribosomal_bL33_CS"/>
</dbReference>
<dbReference type="InterPro" id="IPR038584">
    <property type="entry name" value="Ribosomal_bL33_sf"/>
</dbReference>
<dbReference type="InterPro" id="IPR011332">
    <property type="entry name" value="Ribosomal_zn-bd"/>
</dbReference>
<dbReference type="NCBIfam" id="NF001764">
    <property type="entry name" value="PRK00504.1"/>
    <property type="match status" value="1"/>
</dbReference>
<dbReference type="NCBIfam" id="NF001860">
    <property type="entry name" value="PRK00595.1"/>
    <property type="match status" value="1"/>
</dbReference>
<dbReference type="NCBIfam" id="TIGR01023">
    <property type="entry name" value="rpmG_bact"/>
    <property type="match status" value="1"/>
</dbReference>
<dbReference type="PANTHER" id="PTHR43168">
    <property type="entry name" value="50S RIBOSOMAL PROTEIN L33, CHLOROPLASTIC"/>
    <property type="match status" value="1"/>
</dbReference>
<dbReference type="PANTHER" id="PTHR43168:SF2">
    <property type="entry name" value="LARGE RIBOSOMAL SUBUNIT PROTEIN BL33C"/>
    <property type="match status" value="1"/>
</dbReference>
<dbReference type="Pfam" id="PF00471">
    <property type="entry name" value="Ribosomal_L33"/>
    <property type="match status" value="1"/>
</dbReference>
<dbReference type="SUPFAM" id="SSF57829">
    <property type="entry name" value="Zn-binding ribosomal proteins"/>
    <property type="match status" value="1"/>
</dbReference>
<dbReference type="PROSITE" id="PS00582">
    <property type="entry name" value="RIBOSOMAL_L33"/>
    <property type="match status" value="1"/>
</dbReference>
<keyword id="KW-0687">Ribonucleoprotein</keyword>
<keyword id="KW-0689">Ribosomal protein</keyword>
<feature type="chain" id="PRO_0000356756" description="Large ribosomal subunit protein bL33">
    <location>
        <begin position="1"/>
        <end position="50"/>
    </location>
</feature>
<accession>A6Q6H5</accession>
<name>RL33_SULNB</name>
<protein>
    <recommendedName>
        <fullName evidence="1">Large ribosomal subunit protein bL33</fullName>
    </recommendedName>
    <alternativeName>
        <fullName evidence="2">50S ribosomal protein L33</fullName>
    </alternativeName>
</protein>
<proteinExistence type="inferred from homology"/>
<reference key="1">
    <citation type="journal article" date="2007" name="Proc. Natl. Acad. Sci. U.S.A.">
        <title>Deep-sea vent epsilon-proteobacterial genomes provide insights into emergence of pathogens.</title>
        <authorList>
            <person name="Nakagawa S."/>
            <person name="Takaki Y."/>
            <person name="Shimamura S."/>
            <person name="Reysenbach A.-L."/>
            <person name="Takai K."/>
            <person name="Horikoshi K."/>
        </authorList>
    </citation>
    <scope>NUCLEOTIDE SEQUENCE [LARGE SCALE GENOMIC DNA]</scope>
    <source>
        <strain>NBC37-1</strain>
    </source>
</reference>